<comment type="catalytic activity">
    <reaction evidence="1">
        <text>urea + 2 H2O + H(+) = hydrogencarbonate + 2 NH4(+)</text>
        <dbReference type="Rhea" id="RHEA:20557"/>
        <dbReference type="ChEBI" id="CHEBI:15377"/>
        <dbReference type="ChEBI" id="CHEBI:15378"/>
        <dbReference type="ChEBI" id="CHEBI:16199"/>
        <dbReference type="ChEBI" id="CHEBI:17544"/>
        <dbReference type="ChEBI" id="CHEBI:28938"/>
        <dbReference type="EC" id="3.5.1.5"/>
    </reaction>
</comment>
<comment type="pathway">
    <text evidence="1">Nitrogen metabolism; urea degradation; CO(2) and NH(3) from urea (urease route): step 1/1.</text>
</comment>
<comment type="subunit">
    <text evidence="1">Heterotrimer of UreA (gamma), UreB (beta) and UreC (alpha) subunits. Three heterotrimers associate to form the active enzyme.</text>
</comment>
<comment type="subcellular location">
    <subcellularLocation>
        <location evidence="1">Cytoplasm</location>
    </subcellularLocation>
</comment>
<comment type="similarity">
    <text evidence="1">Belongs to the urease gamma subunit family.</text>
</comment>
<sequence>MELTPREKDKLLIFTAALLAERRKARGLKLNYPEAVALITAAIMEGARDGRTVAELMHEGTTVLGREDVMDGVAEMIPEIQVEATFPDGTKLVTVHHPIV</sequence>
<dbReference type="EC" id="3.5.1.5" evidence="1"/>
<dbReference type="EMBL" id="Y13732">
    <property type="protein sequence ID" value="CAA74062.1"/>
    <property type="molecule type" value="Genomic_DNA"/>
</dbReference>
<dbReference type="EMBL" id="AM260479">
    <property type="protein sequence ID" value="CAJ92222.1"/>
    <property type="molecule type" value="Genomic_DNA"/>
</dbReference>
<dbReference type="RefSeq" id="WP_010809101.1">
    <property type="nucleotide sequence ID" value="NZ_CP039287.1"/>
</dbReference>
<dbReference type="SMR" id="O30334"/>
<dbReference type="STRING" id="381666.H16_A1081"/>
<dbReference type="KEGG" id="reh:H16_A1081"/>
<dbReference type="eggNOG" id="COG0831">
    <property type="taxonomic scope" value="Bacteria"/>
</dbReference>
<dbReference type="HOGENOM" id="CLU_145825_1_0_4"/>
<dbReference type="OrthoDB" id="9797217at2"/>
<dbReference type="UniPathway" id="UPA00258">
    <property type="reaction ID" value="UER00370"/>
</dbReference>
<dbReference type="Proteomes" id="UP000008210">
    <property type="component" value="Chromosome 1"/>
</dbReference>
<dbReference type="GO" id="GO:0005737">
    <property type="term" value="C:cytoplasm"/>
    <property type="evidence" value="ECO:0007669"/>
    <property type="project" value="UniProtKB-SubCell"/>
</dbReference>
<dbReference type="GO" id="GO:0016151">
    <property type="term" value="F:nickel cation binding"/>
    <property type="evidence" value="ECO:0007669"/>
    <property type="project" value="InterPro"/>
</dbReference>
<dbReference type="GO" id="GO:0009039">
    <property type="term" value="F:urease activity"/>
    <property type="evidence" value="ECO:0007669"/>
    <property type="project" value="UniProtKB-UniRule"/>
</dbReference>
<dbReference type="GO" id="GO:0043419">
    <property type="term" value="P:urea catabolic process"/>
    <property type="evidence" value="ECO:0007669"/>
    <property type="project" value="UniProtKB-UniRule"/>
</dbReference>
<dbReference type="CDD" id="cd00390">
    <property type="entry name" value="Urease_gamma"/>
    <property type="match status" value="1"/>
</dbReference>
<dbReference type="Gene3D" id="3.30.280.10">
    <property type="entry name" value="Urease, gamma-like subunit"/>
    <property type="match status" value="1"/>
</dbReference>
<dbReference type="HAMAP" id="MF_00739">
    <property type="entry name" value="Urease_gamma"/>
    <property type="match status" value="1"/>
</dbReference>
<dbReference type="InterPro" id="IPR012010">
    <property type="entry name" value="Urease_gamma"/>
</dbReference>
<dbReference type="InterPro" id="IPR002026">
    <property type="entry name" value="Urease_gamma/gamma-beta_su"/>
</dbReference>
<dbReference type="InterPro" id="IPR036463">
    <property type="entry name" value="Urease_gamma_sf"/>
</dbReference>
<dbReference type="InterPro" id="IPR050069">
    <property type="entry name" value="Urease_subunit"/>
</dbReference>
<dbReference type="NCBIfam" id="NF009712">
    <property type="entry name" value="PRK13241.1"/>
    <property type="match status" value="1"/>
</dbReference>
<dbReference type="NCBIfam" id="TIGR00193">
    <property type="entry name" value="urease_gam"/>
    <property type="match status" value="1"/>
</dbReference>
<dbReference type="PANTHER" id="PTHR33569">
    <property type="entry name" value="UREASE"/>
    <property type="match status" value="1"/>
</dbReference>
<dbReference type="PANTHER" id="PTHR33569:SF1">
    <property type="entry name" value="UREASE"/>
    <property type="match status" value="1"/>
</dbReference>
<dbReference type="Pfam" id="PF00547">
    <property type="entry name" value="Urease_gamma"/>
    <property type="match status" value="1"/>
</dbReference>
<dbReference type="PIRSF" id="PIRSF001223">
    <property type="entry name" value="Urease_gamma"/>
    <property type="match status" value="1"/>
</dbReference>
<dbReference type="SUPFAM" id="SSF54111">
    <property type="entry name" value="Urease, gamma-subunit"/>
    <property type="match status" value="1"/>
</dbReference>
<accession>O30334</accession>
<accession>Q0KCP9</accession>
<evidence type="ECO:0000255" key="1">
    <source>
        <dbReference type="HAMAP-Rule" id="MF_00739"/>
    </source>
</evidence>
<protein>
    <recommendedName>
        <fullName evidence="1">Urease subunit gamma</fullName>
        <ecNumber evidence="1">3.5.1.5</ecNumber>
    </recommendedName>
    <alternativeName>
        <fullName evidence="1">Urea amidohydrolase subunit gamma</fullName>
    </alternativeName>
</protein>
<organism>
    <name type="scientific">Cupriavidus necator (strain ATCC 17699 / DSM 428 / KCTC 22496 / NCIMB 10442 / H16 / Stanier 337)</name>
    <name type="common">Ralstonia eutropha</name>
    <dbReference type="NCBI Taxonomy" id="381666"/>
    <lineage>
        <taxon>Bacteria</taxon>
        <taxon>Pseudomonadati</taxon>
        <taxon>Pseudomonadota</taxon>
        <taxon>Betaproteobacteria</taxon>
        <taxon>Burkholderiales</taxon>
        <taxon>Burkholderiaceae</taxon>
        <taxon>Cupriavidus</taxon>
    </lineage>
</organism>
<reference key="1">
    <citation type="submission" date="1997-09" db="EMBL/GenBank/DDBJ databases">
        <title>Ralstonia eutropha H16 urease genes and proteins.</title>
        <authorList>
            <person name="Piettre C."/>
            <person name="Toussaint A."/>
        </authorList>
    </citation>
    <scope>NUCLEOTIDE SEQUENCE [GENOMIC DNA]</scope>
</reference>
<reference key="2">
    <citation type="journal article" date="2006" name="Nat. Biotechnol.">
        <title>Genome sequence of the bioplastic-producing 'Knallgas' bacterium Ralstonia eutropha H16.</title>
        <authorList>
            <person name="Pohlmann A."/>
            <person name="Fricke W.F."/>
            <person name="Reinecke F."/>
            <person name="Kusian B."/>
            <person name="Liesegang H."/>
            <person name="Cramm R."/>
            <person name="Eitinger T."/>
            <person name="Ewering C."/>
            <person name="Poetter M."/>
            <person name="Schwartz E."/>
            <person name="Strittmatter A."/>
            <person name="Voss I."/>
            <person name="Gottschalk G."/>
            <person name="Steinbuechel A."/>
            <person name="Friedrich B."/>
            <person name="Bowien B."/>
        </authorList>
    </citation>
    <scope>NUCLEOTIDE SEQUENCE [LARGE SCALE GENOMIC DNA]</scope>
    <source>
        <strain>ATCC 17699 / DSM 428 / KCTC 22496 / NCIMB 10442 / H16 / Stanier 337</strain>
    </source>
</reference>
<proteinExistence type="inferred from homology"/>
<gene>
    <name evidence="1" type="primary">ureA</name>
    <name type="ordered locus">H16_A1081</name>
</gene>
<name>URE3_CUPNH</name>
<feature type="chain" id="PRO_0000097987" description="Urease subunit gamma">
    <location>
        <begin position="1"/>
        <end position="100"/>
    </location>
</feature>
<keyword id="KW-0963">Cytoplasm</keyword>
<keyword id="KW-0378">Hydrolase</keyword>
<keyword id="KW-1185">Reference proteome</keyword>